<proteinExistence type="evidence at transcript level"/>
<comment type="function">
    <text evidence="4 5">Serine/threonine-protein kinase involved in the postembryonic regulation of body size, mainly through control of cell growth. In particular, controls the volume of intestine, muscles and hypodermis. In addition, regulates growth, intestinal granule distribution, lifespan and number of offspring.</text>
</comment>
<comment type="catalytic activity">
    <reaction evidence="1">
        <text>L-seryl-[protein] + ATP = O-phospho-L-seryl-[protein] + ADP + H(+)</text>
        <dbReference type="Rhea" id="RHEA:17989"/>
        <dbReference type="Rhea" id="RHEA-COMP:9863"/>
        <dbReference type="Rhea" id="RHEA-COMP:11604"/>
        <dbReference type="ChEBI" id="CHEBI:15378"/>
        <dbReference type="ChEBI" id="CHEBI:29999"/>
        <dbReference type="ChEBI" id="CHEBI:30616"/>
        <dbReference type="ChEBI" id="CHEBI:83421"/>
        <dbReference type="ChEBI" id="CHEBI:456216"/>
        <dbReference type="EC" id="2.7.11.24"/>
    </reaction>
</comment>
<comment type="catalytic activity">
    <reaction evidence="1">
        <text>L-threonyl-[protein] + ATP = O-phospho-L-threonyl-[protein] + ADP + H(+)</text>
        <dbReference type="Rhea" id="RHEA:46608"/>
        <dbReference type="Rhea" id="RHEA-COMP:11060"/>
        <dbReference type="Rhea" id="RHEA-COMP:11605"/>
        <dbReference type="ChEBI" id="CHEBI:15378"/>
        <dbReference type="ChEBI" id="CHEBI:30013"/>
        <dbReference type="ChEBI" id="CHEBI:30616"/>
        <dbReference type="ChEBI" id="CHEBI:61977"/>
        <dbReference type="ChEBI" id="CHEBI:456216"/>
        <dbReference type="EC" id="2.7.11.24"/>
    </reaction>
</comment>
<comment type="cofactor">
    <cofactor evidence="1">
        <name>Mg(2+)</name>
        <dbReference type="ChEBI" id="CHEBI:18420"/>
    </cofactor>
</comment>
<comment type="alternative products">
    <event type="alternative splicing"/>
    <isoform>
        <id>G5EBT1-1</id>
        <name evidence="11">c</name>
        <sequence type="displayed"/>
    </isoform>
    <isoform>
        <id>G5EBT1-2</id>
        <name evidence="9">a</name>
        <sequence type="described" ref="VSP_057670 VSP_057671"/>
    </isoform>
    <isoform>
        <id>G5EBT1-3</id>
        <name evidence="10">b</name>
        <sequence type="described" ref="VSP_057670"/>
    </isoform>
    <isoform>
        <id>G5EBT1-4</id>
        <name evidence="12">d</name>
        <sequence type="described" ref="VSP_057669 VSP_057671"/>
    </isoform>
</comment>
<comment type="tissue specificity">
    <text evidence="4">Expressed in intestine with a stronger expression in the four most anterior cells, muscles, excretory cell, pharynx and, to a lesser extent, in hypodermis.</text>
</comment>
<comment type="disruption phenotype">
    <text evidence="4">RNAi-mediated knockdown results in an approximately 50 percent reduction in number of offspring.</text>
</comment>
<comment type="similarity">
    <text evidence="6">Belongs to the protein kinase superfamily. CMGC Ser/Thr protein kinase family. MAP kinase subfamily.</text>
</comment>
<evidence type="ECO:0000250" key="1">
    <source>
        <dbReference type="UniProtKB" id="Q13164"/>
    </source>
</evidence>
<evidence type="ECO:0000255" key="2">
    <source>
        <dbReference type="PROSITE-ProRule" id="PRU00159"/>
    </source>
</evidence>
<evidence type="ECO:0000256" key="3">
    <source>
        <dbReference type="SAM" id="MobiDB-lite"/>
    </source>
</evidence>
<evidence type="ECO:0000269" key="4">
    <source>
    </source>
</evidence>
<evidence type="ECO:0000269" key="5">
    <source>
    </source>
</evidence>
<evidence type="ECO:0000305" key="6"/>
<evidence type="ECO:0000305" key="7">
    <source>
    </source>
</evidence>
<evidence type="ECO:0000312" key="8">
    <source>
        <dbReference type="Proteomes" id="UP000001940"/>
    </source>
</evidence>
<evidence type="ECO:0000312" key="9">
    <source>
        <dbReference type="WormBase" id="W06B3.2a"/>
    </source>
</evidence>
<evidence type="ECO:0000312" key="10">
    <source>
        <dbReference type="WormBase" id="W06B3.2b"/>
    </source>
</evidence>
<evidence type="ECO:0000312" key="11">
    <source>
        <dbReference type="WormBase" id="W06B3.2c"/>
    </source>
</evidence>
<evidence type="ECO:0000312" key="12">
    <source>
        <dbReference type="WormBase" id="W06B3.2d"/>
    </source>
</evidence>
<accession>G5EBT1</accession>
<accession>G5EBE9</accession>
<accession>G5EBM8</accession>
<accession>G5EDH5</accession>
<sequence>MVFADFLEKIKSLFAKTKDPITSMSPPQENRSPKAEYLNNFFNTNPTNGKSRGSQEAPRKPLGQTNLNVQGSMPAKKEGFNRVLDGLKKRQLQHDFKLERAAETYEPTQNIGSGAFGIVCEAVETSSNQKVAIKKVAHASATPTLARRTLREIRVLRYINHPNIVPLRDIFRTKGPLGIDVFLVMDLMQNNLHHIIYGNEDPLEEHYINAFLGQLLRGLEYLHAACIAHRDLKPSNLLVNQDGTLRIADFGMAKCADNSSKKHDDEEHCYYMTQHVATLPYRAPELLFVLPEHSTAVDMWAVGCIFGEMVIRNEILPGRSVQGQIKMLLTMLGQPPQEVINEVRCDRTRKLIQDFGRKADAEWDDIMFCKARGDDQIVRGNCDTIDFVKQLFQYDAQKRINIQDALLHPYIQRVIPAEAPQKKCPFRVKKDMMQVEDLNHQELISMMKQDVRSAENPITYSELHSGDSTGSTSDMSTNTSGEYSPIAQHEQLLEDVATQISICEPTCDL</sequence>
<gene>
    <name evidence="11" type="primary">sma-5</name>
    <name evidence="11" type="ORF">W06B3.2</name>
</gene>
<feature type="chain" id="PRO_0000433093" description="Mitogen-activated protein kinase sma-5">
    <location>
        <begin position="1"/>
        <end position="509"/>
    </location>
</feature>
<feature type="domain" description="Protein kinase" evidence="2">
    <location>
        <begin position="105"/>
        <end position="411"/>
    </location>
</feature>
<feature type="region of interest" description="Disordered" evidence="3">
    <location>
        <begin position="19"/>
        <end position="72"/>
    </location>
</feature>
<feature type="region of interest" description="Disordered" evidence="3">
    <location>
        <begin position="460"/>
        <end position="482"/>
    </location>
</feature>
<feature type="compositionally biased region" description="Polar residues" evidence="3">
    <location>
        <begin position="20"/>
        <end position="30"/>
    </location>
</feature>
<feature type="compositionally biased region" description="Polar residues" evidence="3">
    <location>
        <begin position="40"/>
        <end position="54"/>
    </location>
</feature>
<feature type="compositionally biased region" description="Low complexity" evidence="3">
    <location>
        <begin position="466"/>
        <end position="481"/>
    </location>
</feature>
<feature type="active site" description="Proton acceptor" evidence="2">
    <location>
        <position position="231"/>
    </location>
</feature>
<feature type="binding site" evidence="2">
    <location>
        <begin position="111"/>
        <end position="119"/>
    </location>
    <ligand>
        <name>ATP</name>
        <dbReference type="ChEBI" id="CHEBI:30616"/>
    </ligand>
</feature>
<feature type="binding site" evidence="2">
    <location>
        <position position="134"/>
    </location>
    <ligand>
        <name>ATP</name>
        <dbReference type="ChEBI" id="CHEBI:30616"/>
    </ligand>
</feature>
<feature type="splice variant" id="VSP_057669" description="In isoform d." evidence="6">
    <location>
        <begin position="1"/>
        <end position="72"/>
    </location>
</feature>
<feature type="splice variant" id="VSP_057670" description="In isoform a and isoform b." evidence="6">
    <location>
        <begin position="1"/>
        <end position="23"/>
    </location>
</feature>
<feature type="splice variant" id="VSP_057671" description="In isoform a and isoform d." evidence="6">
    <original>DSTGSTSDMSTNTSGEYSPIAQHEQLLEDVATQISICEPTCDL</original>
    <variation>GDYNTWIAGVFQSERSREIIKNEYSTSSYTSPELDREYIGHVNQYQRGILSNCAA</variation>
    <location>
        <begin position="467"/>
        <end position="509"/>
    </location>
</feature>
<reference evidence="6" key="1">
    <citation type="journal article" date="2005" name="Development">
        <title>Control of body size by SMA-5, a homolog of MAP kinase BMK1/ERK5, in C. elegans.</title>
        <authorList>
            <person name="Watanabe N."/>
            <person name="Nagamatsu Y."/>
            <person name="Gengyo-Ando K."/>
            <person name="Mitani S."/>
            <person name="Ohshima Y."/>
        </authorList>
    </citation>
    <scope>NUCLEOTIDE SEQUENCE [MRNA] (ISOFORMS A AND D)</scope>
    <scope>FUNCTION</scope>
    <scope>TISSUE SPECIFICITY</scope>
    <scope>DISRUPTION PHENOTYPE</scope>
</reference>
<reference evidence="8" key="2">
    <citation type="journal article" date="1998" name="Science">
        <title>Genome sequence of the nematode C. elegans: a platform for investigating biology.</title>
        <authorList>
            <consortium name="The C. elegans sequencing consortium"/>
        </authorList>
    </citation>
    <scope>NUCLEOTIDE SEQUENCE [LARGE SCALE GENOMIC DNA]</scope>
    <source>
        <strain evidence="8">Bristol N2</strain>
    </source>
</reference>
<reference evidence="6" key="3">
    <citation type="journal article" date="2007" name="Genes Cells">
        <title>Mutants carrying two sma mutations are super small in the nematode C. elegans.</title>
        <authorList>
            <person name="Watanabe N."/>
            <person name="Ishihara T."/>
            <person name="Ohshima Y."/>
        </authorList>
    </citation>
    <scope>FUNCTION</scope>
</reference>
<name>SMA5_CAEEL</name>
<dbReference type="EC" id="2.7.11.24" evidence="1"/>
<dbReference type="EMBL" id="BX284606">
    <property type="protein sequence ID" value="CAA18361.3"/>
    <property type="molecule type" value="Genomic_DNA"/>
</dbReference>
<dbReference type="EMBL" id="BX284606">
    <property type="protein sequence ID" value="CAD44158.1"/>
    <property type="molecule type" value="Genomic_DNA"/>
</dbReference>
<dbReference type="EMBL" id="BX284606">
    <property type="protein sequence ID" value="CAJ21562.1"/>
    <property type="molecule type" value="Genomic_DNA"/>
</dbReference>
<dbReference type="EMBL" id="BX284606">
    <property type="protein sequence ID" value="CAJ55250.1"/>
    <property type="molecule type" value="Genomic_DNA"/>
</dbReference>
<dbReference type="PIR" id="T20076">
    <property type="entry name" value="T20076"/>
</dbReference>
<dbReference type="RefSeq" id="NP_001033572.1">
    <property type="nucleotide sequence ID" value="NM_001038483.5"/>
</dbReference>
<dbReference type="RefSeq" id="NP_001041297.1">
    <molecule id="G5EBT1-1"/>
    <property type="nucleotide sequence ID" value="NM_001047832.3"/>
</dbReference>
<dbReference type="RefSeq" id="NP_001366649.1">
    <molecule id="G5EBT1-2"/>
    <property type="nucleotide sequence ID" value="NM_001381114.3"/>
</dbReference>
<dbReference type="RefSeq" id="NP_001379447.1">
    <molecule id="G5EBT1-4"/>
    <property type="nucleotide sequence ID" value="NM_001392855.1"/>
</dbReference>
<dbReference type="RefSeq" id="NP_741908.1">
    <molecule id="G5EBT1-3"/>
    <property type="nucleotide sequence ID" value="NM_171782.6"/>
</dbReference>
<dbReference type="RefSeq" id="NP_741909.1">
    <property type="nucleotide sequence ID" value="NM_171783.3"/>
</dbReference>
<dbReference type="SMR" id="G5EBT1"/>
<dbReference type="FunCoup" id="G5EBT1">
    <property type="interactions" value="131"/>
</dbReference>
<dbReference type="STRING" id="6239.W06B3.2c.1"/>
<dbReference type="PaxDb" id="6239-W06B3.2c"/>
<dbReference type="PeptideAtlas" id="G5EBT1"/>
<dbReference type="EnsemblMetazoa" id="W06B3.2a.1">
    <molecule id="G5EBT1-2"/>
    <property type="protein sequence ID" value="W06B3.2a.1"/>
    <property type="gene ID" value="WBGene00004859"/>
</dbReference>
<dbReference type="EnsemblMetazoa" id="W06B3.2a.2">
    <molecule id="G5EBT1-2"/>
    <property type="protein sequence ID" value="W06B3.2a.2"/>
    <property type="gene ID" value="WBGene00004859"/>
</dbReference>
<dbReference type="EnsemblMetazoa" id="W06B3.2b.1">
    <molecule id="G5EBT1-3"/>
    <property type="protein sequence ID" value="W06B3.2b.1"/>
    <property type="gene ID" value="WBGene00004859"/>
</dbReference>
<dbReference type="EnsemblMetazoa" id="W06B3.2c.1">
    <molecule id="G5EBT1-1"/>
    <property type="protein sequence ID" value="W06B3.2c.1"/>
    <property type="gene ID" value="WBGene00004859"/>
</dbReference>
<dbReference type="EnsemblMetazoa" id="W06B3.2d.1">
    <molecule id="G5EBT1-4"/>
    <property type="protein sequence ID" value="W06B3.2d.1"/>
    <property type="gene ID" value="WBGene00004859"/>
</dbReference>
<dbReference type="GeneID" id="181373"/>
<dbReference type="KEGG" id="cel:CELE_W06B3.2"/>
<dbReference type="AGR" id="WB:WBGene00004859"/>
<dbReference type="CTD" id="181373"/>
<dbReference type="WormBase" id="W06B3.2a">
    <molecule id="G5EBT1-2"/>
    <property type="protein sequence ID" value="CE31629"/>
    <property type="gene ID" value="WBGene00004859"/>
    <property type="gene designation" value="sma-5"/>
</dbReference>
<dbReference type="WormBase" id="W06B3.2b">
    <molecule id="G5EBT1-3"/>
    <property type="protein sequence ID" value="CE31630"/>
    <property type="gene ID" value="WBGene00004859"/>
    <property type="gene designation" value="sma-5"/>
</dbReference>
<dbReference type="WormBase" id="W06B3.2c">
    <molecule id="G5EBT1-1"/>
    <property type="protein sequence ID" value="CE39526"/>
    <property type="gene ID" value="WBGene00004859"/>
    <property type="gene designation" value="sma-5"/>
</dbReference>
<dbReference type="WormBase" id="W06B3.2d">
    <molecule id="G5EBT1-4"/>
    <property type="protein sequence ID" value="CE38984"/>
    <property type="gene ID" value="WBGene00004859"/>
    <property type="gene designation" value="sma-5"/>
</dbReference>
<dbReference type="eggNOG" id="KOG0660">
    <property type="taxonomic scope" value="Eukaryota"/>
</dbReference>
<dbReference type="InParanoid" id="G5EBT1"/>
<dbReference type="OMA" id="CYYMTQH"/>
<dbReference type="OrthoDB" id="192887at2759"/>
<dbReference type="PhylomeDB" id="G5EBT1"/>
<dbReference type="PRO" id="PR:G5EBT1"/>
<dbReference type="Proteomes" id="UP000001940">
    <property type="component" value="Chromosome X"/>
</dbReference>
<dbReference type="Bgee" id="WBGene00004859">
    <property type="expression patterns" value="Expressed in pharyngeal muscle cell (C elegans) and 3 other cell types or tissues"/>
</dbReference>
<dbReference type="GO" id="GO:0005737">
    <property type="term" value="C:cytoplasm"/>
    <property type="evidence" value="ECO:0000318"/>
    <property type="project" value="GO_Central"/>
</dbReference>
<dbReference type="GO" id="GO:0005634">
    <property type="term" value="C:nucleus"/>
    <property type="evidence" value="ECO:0000318"/>
    <property type="project" value="GO_Central"/>
</dbReference>
<dbReference type="GO" id="GO:0005524">
    <property type="term" value="F:ATP binding"/>
    <property type="evidence" value="ECO:0007669"/>
    <property type="project" value="UniProtKB-KW"/>
</dbReference>
<dbReference type="GO" id="GO:0004707">
    <property type="term" value="F:MAP kinase activity"/>
    <property type="evidence" value="ECO:0007669"/>
    <property type="project" value="UniProtKB-EC"/>
</dbReference>
<dbReference type="GO" id="GO:0106310">
    <property type="term" value="F:protein serine kinase activity"/>
    <property type="evidence" value="ECO:0007669"/>
    <property type="project" value="RHEA"/>
</dbReference>
<dbReference type="GO" id="GO:0004674">
    <property type="term" value="F:protein serine/threonine kinase activity"/>
    <property type="evidence" value="ECO:0000318"/>
    <property type="project" value="GO_Central"/>
</dbReference>
<dbReference type="GO" id="GO:0008283">
    <property type="term" value="P:cell population proliferation"/>
    <property type="evidence" value="ECO:0000315"/>
    <property type="project" value="UniProtKB"/>
</dbReference>
<dbReference type="GO" id="GO:0040024">
    <property type="term" value="P:dauer larval development"/>
    <property type="evidence" value="ECO:0000316"/>
    <property type="project" value="WormBase"/>
</dbReference>
<dbReference type="GO" id="GO:0008340">
    <property type="term" value="P:determination of adult lifespan"/>
    <property type="evidence" value="ECO:0000315"/>
    <property type="project" value="UniProtKB"/>
</dbReference>
<dbReference type="GO" id="GO:0035556">
    <property type="term" value="P:intracellular signal transduction"/>
    <property type="evidence" value="ECO:0000318"/>
    <property type="project" value="GO_Central"/>
</dbReference>
<dbReference type="GO" id="GO:0002119">
    <property type="term" value="P:nematode larval development"/>
    <property type="evidence" value="ECO:0000315"/>
    <property type="project" value="UniProtKB"/>
</dbReference>
<dbReference type="GO" id="GO:0051640">
    <property type="term" value="P:organelle localization"/>
    <property type="evidence" value="ECO:0000315"/>
    <property type="project" value="UniProtKB"/>
</dbReference>
<dbReference type="GO" id="GO:0007567">
    <property type="term" value="P:parturition"/>
    <property type="evidence" value="ECO:0000315"/>
    <property type="project" value="UniProtKB"/>
</dbReference>
<dbReference type="GO" id="GO:0030307">
    <property type="term" value="P:positive regulation of cell growth"/>
    <property type="evidence" value="ECO:0000315"/>
    <property type="project" value="UniProtKB"/>
</dbReference>
<dbReference type="GO" id="GO:0045793">
    <property type="term" value="P:positive regulation of cell size"/>
    <property type="evidence" value="ECO:0000315"/>
    <property type="project" value="UniProtKB"/>
</dbReference>
<dbReference type="GO" id="GO:0040018">
    <property type="term" value="P:positive regulation of multicellular organism growth"/>
    <property type="evidence" value="ECO:0000315"/>
    <property type="project" value="UniProtKB"/>
</dbReference>
<dbReference type="GO" id="GO:0009791">
    <property type="term" value="P:post-embryonic development"/>
    <property type="evidence" value="ECO:0000316"/>
    <property type="project" value="UniProtKB"/>
</dbReference>
<dbReference type="GO" id="GO:0040014">
    <property type="term" value="P:regulation of multicellular organism growth"/>
    <property type="evidence" value="ECO:0000315"/>
    <property type="project" value="UniProtKB"/>
</dbReference>
<dbReference type="CDD" id="cd07855">
    <property type="entry name" value="STKc_ERK5"/>
    <property type="match status" value="1"/>
</dbReference>
<dbReference type="FunFam" id="3.30.200.20:FF:000553">
    <property type="entry name" value="Mitogen-activated protein kinase"/>
    <property type="match status" value="1"/>
</dbReference>
<dbReference type="FunFam" id="1.10.510.10:FF:002169">
    <property type="entry name" value="Mitogen-activated protein kinase sma-5"/>
    <property type="match status" value="1"/>
</dbReference>
<dbReference type="Gene3D" id="3.30.200.20">
    <property type="entry name" value="Phosphorylase Kinase, domain 1"/>
    <property type="match status" value="1"/>
</dbReference>
<dbReference type="Gene3D" id="1.10.510.10">
    <property type="entry name" value="Transferase(Phosphotransferase) domain 1"/>
    <property type="match status" value="1"/>
</dbReference>
<dbReference type="InterPro" id="IPR011009">
    <property type="entry name" value="Kinase-like_dom_sf"/>
</dbReference>
<dbReference type="InterPro" id="IPR050117">
    <property type="entry name" value="MAP_kinase"/>
</dbReference>
<dbReference type="InterPro" id="IPR000719">
    <property type="entry name" value="Prot_kinase_dom"/>
</dbReference>
<dbReference type="InterPro" id="IPR017441">
    <property type="entry name" value="Protein_kinase_ATP_BS"/>
</dbReference>
<dbReference type="InterPro" id="IPR008271">
    <property type="entry name" value="Ser/Thr_kinase_AS"/>
</dbReference>
<dbReference type="PANTHER" id="PTHR24055">
    <property type="entry name" value="MITOGEN-ACTIVATED PROTEIN KINASE"/>
    <property type="match status" value="1"/>
</dbReference>
<dbReference type="Pfam" id="PF00069">
    <property type="entry name" value="Pkinase"/>
    <property type="match status" value="1"/>
</dbReference>
<dbReference type="SMART" id="SM00220">
    <property type="entry name" value="S_TKc"/>
    <property type="match status" value="1"/>
</dbReference>
<dbReference type="SUPFAM" id="SSF56112">
    <property type="entry name" value="Protein kinase-like (PK-like)"/>
    <property type="match status" value="1"/>
</dbReference>
<dbReference type="PROSITE" id="PS00107">
    <property type="entry name" value="PROTEIN_KINASE_ATP"/>
    <property type="match status" value="1"/>
</dbReference>
<dbReference type="PROSITE" id="PS50011">
    <property type="entry name" value="PROTEIN_KINASE_DOM"/>
    <property type="match status" value="1"/>
</dbReference>
<dbReference type="PROSITE" id="PS00108">
    <property type="entry name" value="PROTEIN_KINASE_ST"/>
    <property type="match status" value="1"/>
</dbReference>
<protein>
    <recommendedName>
        <fullName evidence="7">Mitogen-activated protein kinase sma-5</fullName>
        <ecNumber evidence="1">2.7.11.24</ecNumber>
    </recommendedName>
</protein>
<organism evidence="8">
    <name type="scientific">Caenorhabditis elegans</name>
    <dbReference type="NCBI Taxonomy" id="6239"/>
    <lineage>
        <taxon>Eukaryota</taxon>
        <taxon>Metazoa</taxon>
        <taxon>Ecdysozoa</taxon>
        <taxon>Nematoda</taxon>
        <taxon>Chromadorea</taxon>
        <taxon>Rhabditida</taxon>
        <taxon>Rhabditina</taxon>
        <taxon>Rhabditomorpha</taxon>
        <taxon>Rhabditoidea</taxon>
        <taxon>Rhabditidae</taxon>
        <taxon>Peloderinae</taxon>
        <taxon>Caenorhabditis</taxon>
    </lineage>
</organism>
<keyword id="KW-0025">Alternative splicing</keyword>
<keyword id="KW-0067">ATP-binding</keyword>
<keyword id="KW-0418">Kinase</keyword>
<keyword id="KW-0547">Nucleotide-binding</keyword>
<keyword id="KW-1185">Reference proteome</keyword>
<keyword id="KW-0723">Serine/threonine-protein kinase</keyword>
<keyword id="KW-0808">Transferase</keyword>